<gene>
    <name evidence="1" type="primary">rplU</name>
    <name type="ordered locus">Sca_1258.1</name>
    <name type="ORF">Sca_1258a</name>
</gene>
<feature type="chain" id="PRO_1000166740" description="Large ribosomal subunit protein bL21">
    <location>
        <begin position="1"/>
        <end position="102"/>
    </location>
</feature>
<feature type="region of interest" description="Disordered" evidence="2">
    <location>
        <begin position="79"/>
        <end position="102"/>
    </location>
</feature>
<feature type="compositionally biased region" description="Basic residues" evidence="2">
    <location>
        <begin position="79"/>
        <end position="91"/>
    </location>
</feature>
<keyword id="KW-1185">Reference proteome</keyword>
<keyword id="KW-0687">Ribonucleoprotein</keyword>
<keyword id="KW-0689">Ribosomal protein</keyword>
<keyword id="KW-0694">RNA-binding</keyword>
<keyword id="KW-0699">rRNA-binding</keyword>
<reference key="1">
    <citation type="journal article" date="2009" name="Appl. Environ. Microbiol.">
        <title>Genome analysis of the meat starter culture bacterium Staphylococcus carnosus TM300.</title>
        <authorList>
            <person name="Rosenstein R."/>
            <person name="Nerz C."/>
            <person name="Biswas L."/>
            <person name="Resch A."/>
            <person name="Raddatz G."/>
            <person name="Schuster S.C."/>
            <person name="Goetz F."/>
        </authorList>
    </citation>
    <scope>NUCLEOTIDE SEQUENCE [LARGE SCALE GENOMIC DNA]</scope>
    <source>
        <strain>TM300</strain>
    </source>
</reference>
<organism>
    <name type="scientific">Staphylococcus carnosus (strain TM300)</name>
    <dbReference type="NCBI Taxonomy" id="396513"/>
    <lineage>
        <taxon>Bacteria</taxon>
        <taxon>Bacillati</taxon>
        <taxon>Bacillota</taxon>
        <taxon>Bacilli</taxon>
        <taxon>Bacillales</taxon>
        <taxon>Staphylococcaceae</taxon>
        <taxon>Staphylococcus</taxon>
    </lineage>
</organism>
<sequence length="102" mass="11318">MFAIIETGGKQIKVEEGQEIYVEKLDVNEGDAFTFDKVLFVGGDAVKVGAPTVEGATVSATVNKQGRGKKITVFTYRRRKDSKRKKGHRQPYTKLTIDKINA</sequence>
<name>RL21_STACT</name>
<evidence type="ECO:0000255" key="1">
    <source>
        <dbReference type="HAMAP-Rule" id="MF_01363"/>
    </source>
</evidence>
<evidence type="ECO:0000256" key="2">
    <source>
        <dbReference type="SAM" id="MobiDB-lite"/>
    </source>
</evidence>
<evidence type="ECO:0000305" key="3"/>
<protein>
    <recommendedName>
        <fullName evidence="1">Large ribosomal subunit protein bL21</fullName>
    </recommendedName>
    <alternativeName>
        <fullName evidence="3">50S ribosomal protein L21</fullName>
    </alternativeName>
</protein>
<proteinExistence type="inferred from homology"/>
<dbReference type="EMBL" id="AM295250">
    <property type="protein sequence ID" value="CAL28165.1"/>
    <property type="molecule type" value="Genomic_DNA"/>
</dbReference>
<dbReference type="RefSeq" id="WP_015900505.1">
    <property type="nucleotide sequence ID" value="NC_012121.1"/>
</dbReference>
<dbReference type="SMR" id="B9DNF0"/>
<dbReference type="GeneID" id="93793684"/>
<dbReference type="KEGG" id="sca:SCA_1258"/>
<dbReference type="eggNOG" id="COG0261">
    <property type="taxonomic scope" value="Bacteria"/>
</dbReference>
<dbReference type="HOGENOM" id="CLU_061463_3_2_9"/>
<dbReference type="OrthoDB" id="9813334at2"/>
<dbReference type="BioCyc" id="SCAR396513:SCA_RS06290-MONOMER"/>
<dbReference type="Proteomes" id="UP000000444">
    <property type="component" value="Chromosome"/>
</dbReference>
<dbReference type="GO" id="GO:0005737">
    <property type="term" value="C:cytoplasm"/>
    <property type="evidence" value="ECO:0007669"/>
    <property type="project" value="UniProtKB-ARBA"/>
</dbReference>
<dbReference type="GO" id="GO:1990904">
    <property type="term" value="C:ribonucleoprotein complex"/>
    <property type="evidence" value="ECO:0007669"/>
    <property type="project" value="UniProtKB-KW"/>
</dbReference>
<dbReference type="GO" id="GO:0005840">
    <property type="term" value="C:ribosome"/>
    <property type="evidence" value="ECO:0007669"/>
    <property type="project" value="UniProtKB-KW"/>
</dbReference>
<dbReference type="GO" id="GO:0019843">
    <property type="term" value="F:rRNA binding"/>
    <property type="evidence" value="ECO:0007669"/>
    <property type="project" value="UniProtKB-UniRule"/>
</dbReference>
<dbReference type="GO" id="GO:0003735">
    <property type="term" value="F:structural constituent of ribosome"/>
    <property type="evidence" value="ECO:0007669"/>
    <property type="project" value="InterPro"/>
</dbReference>
<dbReference type="GO" id="GO:0006412">
    <property type="term" value="P:translation"/>
    <property type="evidence" value="ECO:0007669"/>
    <property type="project" value="UniProtKB-UniRule"/>
</dbReference>
<dbReference type="HAMAP" id="MF_01363">
    <property type="entry name" value="Ribosomal_bL21"/>
    <property type="match status" value="1"/>
</dbReference>
<dbReference type="InterPro" id="IPR028909">
    <property type="entry name" value="bL21-like"/>
</dbReference>
<dbReference type="InterPro" id="IPR036164">
    <property type="entry name" value="bL21-like_sf"/>
</dbReference>
<dbReference type="InterPro" id="IPR001787">
    <property type="entry name" value="Ribosomal_bL21"/>
</dbReference>
<dbReference type="NCBIfam" id="TIGR00061">
    <property type="entry name" value="L21"/>
    <property type="match status" value="1"/>
</dbReference>
<dbReference type="PANTHER" id="PTHR21349">
    <property type="entry name" value="50S RIBOSOMAL PROTEIN L21"/>
    <property type="match status" value="1"/>
</dbReference>
<dbReference type="PANTHER" id="PTHR21349:SF0">
    <property type="entry name" value="LARGE RIBOSOMAL SUBUNIT PROTEIN BL21M"/>
    <property type="match status" value="1"/>
</dbReference>
<dbReference type="Pfam" id="PF00829">
    <property type="entry name" value="Ribosomal_L21p"/>
    <property type="match status" value="1"/>
</dbReference>
<dbReference type="SUPFAM" id="SSF141091">
    <property type="entry name" value="L21p-like"/>
    <property type="match status" value="1"/>
</dbReference>
<comment type="function">
    <text evidence="1">This protein binds to 23S rRNA in the presence of protein L20.</text>
</comment>
<comment type="subunit">
    <text evidence="1">Part of the 50S ribosomal subunit. Contacts protein L20.</text>
</comment>
<comment type="similarity">
    <text evidence="1">Belongs to the bacterial ribosomal protein bL21 family.</text>
</comment>
<accession>B9DNF0</accession>